<dbReference type="EMBL" id="U00096">
    <property type="protein sequence ID" value="AAC73206.1"/>
    <property type="molecule type" value="Genomic_DNA"/>
</dbReference>
<dbReference type="EMBL" id="AP009048">
    <property type="protein sequence ID" value="BAB96663.2"/>
    <property type="molecule type" value="Genomic_DNA"/>
</dbReference>
<dbReference type="EMBL" id="X55034">
    <property type="protein sequence ID" value="CAA38872.1"/>
    <property type="molecule type" value="Genomic_DNA"/>
</dbReference>
<dbReference type="EMBL" id="K02668">
    <property type="protein sequence ID" value="AAA23818.1"/>
    <property type="molecule type" value="Genomic_DNA"/>
</dbReference>
<dbReference type="EMBL" id="M19211">
    <property type="protein sequence ID" value="AAA83848.1"/>
    <property type="molecule type" value="Genomic_DNA"/>
</dbReference>
<dbReference type="PIR" id="G64731">
    <property type="entry name" value="CEECZ"/>
</dbReference>
<dbReference type="RefSeq" id="NP_414637.1">
    <property type="nucleotide sequence ID" value="NC_000913.3"/>
</dbReference>
<dbReference type="RefSeq" id="WP_000462776.1">
    <property type="nucleotide sequence ID" value="NZ_STEB01000010.1"/>
</dbReference>
<dbReference type="PDB" id="1F47">
    <property type="method" value="X-ray"/>
    <property type="resolution" value="1.95 A"/>
    <property type="chains" value="A=367-383"/>
</dbReference>
<dbReference type="PDB" id="5HAW">
    <property type="method" value="X-ray"/>
    <property type="resolution" value="1.89 A"/>
    <property type="chains" value="K/L=370-379"/>
</dbReference>
<dbReference type="PDB" id="5HBU">
    <property type="method" value="X-ray"/>
    <property type="resolution" value="2.60 A"/>
    <property type="chains" value="K=370-379"/>
</dbReference>
<dbReference type="PDB" id="5HSZ">
    <property type="method" value="X-ray"/>
    <property type="resolution" value="2.30 A"/>
    <property type="chains" value="K=372-382"/>
</dbReference>
<dbReference type="PDB" id="5K58">
    <property type="method" value="X-ray"/>
    <property type="resolution" value="2.77 A"/>
    <property type="chains" value="K/L/M/N=372-379"/>
</dbReference>
<dbReference type="PDB" id="5KOA">
    <property type="method" value="X-ray"/>
    <property type="resolution" value="2.67 A"/>
    <property type="chains" value="D=370-381"/>
</dbReference>
<dbReference type="PDB" id="6LL6">
    <property type="method" value="X-ray"/>
    <property type="resolution" value="2.50 A"/>
    <property type="chains" value="A=11-316"/>
</dbReference>
<dbReference type="PDB" id="6UMK">
    <property type="method" value="X-ray"/>
    <property type="resolution" value="1.35 A"/>
    <property type="chains" value="A=10-316"/>
</dbReference>
<dbReference type="PDB" id="6UNX">
    <property type="method" value="X-ray"/>
    <property type="resolution" value="1.40 A"/>
    <property type="chains" value="A=12-316"/>
</dbReference>
<dbReference type="PDB" id="8GZX">
    <property type="method" value="X-ray"/>
    <property type="resolution" value="1.84 A"/>
    <property type="chains" value="A=11-316"/>
</dbReference>
<dbReference type="PDB" id="8GZY">
    <property type="method" value="X-ray"/>
    <property type="resolution" value="2.60 A"/>
    <property type="chains" value="A/C/E=11-316"/>
</dbReference>
<dbReference type="PDBsum" id="1F47"/>
<dbReference type="PDBsum" id="5HAW"/>
<dbReference type="PDBsum" id="5HBU"/>
<dbReference type="PDBsum" id="5HSZ"/>
<dbReference type="PDBsum" id="5K58"/>
<dbReference type="PDBsum" id="5KOA"/>
<dbReference type="PDBsum" id="6LL6"/>
<dbReference type="PDBsum" id="6UMK"/>
<dbReference type="PDBsum" id="6UNX"/>
<dbReference type="PDBsum" id="8GZX"/>
<dbReference type="PDBsum" id="8GZY"/>
<dbReference type="SMR" id="P0A9A6"/>
<dbReference type="BioGRID" id="4261887">
    <property type="interactions" value="593"/>
</dbReference>
<dbReference type="BioGRID" id="849188">
    <property type="interactions" value="8"/>
</dbReference>
<dbReference type="ComplexPortal" id="CPX-1936">
    <property type="entry name" value="Divisome complex"/>
</dbReference>
<dbReference type="DIP" id="DIP-31873N"/>
<dbReference type="FunCoup" id="P0A9A6">
    <property type="interactions" value="713"/>
</dbReference>
<dbReference type="IntAct" id="P0A9A6">
    <property type="interactions" value="61"/>
</dbReference>
<dbReference type="MINT" id="P0A9A6"/>
<dbReference type="STRING" id="511145.b0095"/>
<dbReference type="BindingDB" id="P0A9A6"/>
<dbReference type="ChEMBL" id="CHEMBL3999"/>
<dbReference type="jPOST" id="P0A9A6"/>
<dbReference type="PaxDb" id="511145-b0095"/>
<dbReference type="EnsemblBacteria" id="AAC73206">
    <property type="protein sequence ID" value="AAC73206"/>
    <property type="gene ID" value="b0095"/>
</dbReference>
<dbReference type="GeneID" id="93777339"/>
<dbReference type="GeneID" id="944786"/>
<dbReference type="KEGG" id="ecj:JW0093"/>
<dbReference type="KEGG" id="eco:b0095"/>
<dbReference type="KEGG" id="ecoc:C3026_00380"/>
<dbReference type="PATRIC" id="fig|1411691.4.peg.2185"/>
<dbReference type="EchoBASE" id="EB0343"/>
<dbReference type="eggNOG" id="COG0206">
    <property type="taxonomic scope" value="Bacteria"/>
</dbReference>
<dbReference type="HOGENOM" id="CLU_024865_0_1_6"/>
<dbReference type="InParanoid" id="P0A9A6"/>
<dbReference type="OMA" id="GNPSIGQ"/>
<dbReference type="OrthoDB" id="9813375at2"/>
<dbReference type="PhylomeDB" id="P0A9A6"/>
<dbReference type="BioCyc" id="EcoCyc:EG10347-MONOMER"/>
<dbReference type="BRENDA" id="3.6.5.6">
    <property type="organism ID" value="2026"/>
</dbReference>
<dbReference type="CD-CODE" id="3E1EA7A0">
    <property type="entry name" value="Synthetic Condensate 000114"/>
</dbReference>
<dbReference type="CD-CODE" id="7BA5F8B6">
    <property type="entry name" value="Synthetic Condensate 000223"/>
</dbReference>
<dbReference type="CD-CODE" id="D447D79E">
    <property type="entry name" value="FtsZ/SlmA body"/>
</dbReference>
<dbReference type="CD-CODE" id="E92D4409">
    <property type="entry name" value="FtsZ condensate"/>
</dbReference>
<dbReference type="EvolutionaryTrace" id="P0A9A6"/>
<dbReference type="PRO" id="PR:P0A9A6"/>
<dbReference type="Proteomes" id="UP000000625">
    <property type="component" value="Chromosome"/>
</dbReference>
<dbReference type="GO" id="GO:0032153">
    <property type="term" value="C:cell division site"/>
    <property type="evidence" value="ECO:0000314"/>
    <property type="project" value="EcoliWiki"/>
</dbReference>
<dbReference type="GO" id="GO:0005737">
    <property type="term" value="C:cytoplasm"/>
    <property type="evidence" value="ECO:0000314"/>
    <property type="project" value="EcoliWiki"/>
</dbReference>
<dbReference type="GO" id="GO:1990586">
    <property type="term" value="C:divisome complex"/>
    <property type="evidence" value="ECO:0000303"/>
    <property type="project" value="ComplexPortal"/>
</dbReference>
<dbReference type="GO" id="GO:0005886">
    <property type="term" value="C:plasma membrane"/>
    <property type="evidence" value="ECO:0000303"/>
    <property type="project" value="ComplexPortal"/>
</dbReference>
<dbReference type="GO" id="GO:0005525">
    <property type="term" value="F:GTP binding"/>
    <property type="evidence" value="ECO:0000314"/>
    <property type="project" value="EcoliWiki"/>
</dbReference>
<dbReference type="GO" id="GO:0003924">
    <property type="term" value="F:GTPase activity"/>
    <property type="evidence" value="ECO:0000314"/>
    <property type="project" value="EcoliWiki"/>
</dbReference>
<dbReference type="GO" id="GO:0042802">
    <property type="term" value="F:identical protein binding"/>
    <property type="evidence" value="ECO:0000353"/>
    <property type="project" value="IntAct"/>
</dbReference>
<dbReference type="GO" id="GO:0051301">
    <property type="term" value="P:cell division"/>
    <property type="evidence" value="ECO:0000315"/>
    <property type="project" value="EcoliWiki"/>
</dbReference>
<dbReference type="GO" id="GO:0000917">
    <property type="term" value="P:division septum assembly"/>
    <property type="evidence" value="ECO:0000303"/>
    <property type="project" value="ComplexPortal"/>
</dbReference>
<dbReference type="GO" id="GO:0043093">
    <property type="term" value="P:FtsZ-dependent cytokinesis"/>
    <property type="evidence" value="ECO:0000303"/>
    <property type="project" value="ComplexPortal"/>
</dbReference>
<dbReference type="GO" id="GO:0051258">
    <property type="term" value="P:protein polymerization"/>
    <property type="evidence" value="ECO:0000314"/>
    <property type="project" value="EcoliWiki"/>
</dbReference>
<dbReference type="CDD" id="cd02201">
    <property type="entry name" value="FtsZ_type1"/>
    <property type="match status" value="1"/>
</dbReference>
<dbReference type="DisProt" id="DP02201"/>
<dbReference type="FunFam" id="3.30.1330.20:FF:000004">
    <property type="entry name" value="Cell division protein FtsZ"/>
    <property type="match status" value="1"/>
</dbReference>
<dbReference type="FunFam" id="3.40.50.1440:FF:000023">
    <property type="entry name" value="Cell division protein FtsZ"/>
    <property type="match status" value="1"/>
</dbReference>
<dbReference type="Gene3D" id="3.30.1330.20">
    <property type="entry name" value="Tubulin/FtsZ, C-terminal domain"/>
    <property type="match status" value="1"/>
</dbReference>
<dbReference type="Gene3D" id="3.40.50.1440">
    <property type="entry name" value="Tubulin/FtsZ, GTPase domain"/>
    <property type="match status" value="1"/>
</dbReference>
<dbReference type="HAMAP" id="MF_00909">
    <property type="entry name" value="FtsZ"/>
    <property type="match status" value="1"/>
</dbReference>
<dbReference type="InterPro" id="IPR000158">
    <property type="entry name" value="Cell_div_FtsZ"/>
</dbReference>
<dbReference type="InterPro" id="IPR020805">
    <property type="entry name" value="Cell_div_FtsZ_CS"/>
</dbReference>
<dbReference type="InterPro" id="IPR045061">
    <property type="entry name" value="FtsZ/CetZ"/>
</dbReference>
<dbReference type="InterPro" id="IPR024757">
    <property type="entry name" value="FtsZ_C"/>
</dbReference>
<dbReference type="InterPro" id="IPR008280">
    <property type="entry name" value="Tub_FtsZ_C"/>
</dbReference>
<dbReference type="InterPro" id="IPR037103">
    <property type="entry name" value="Tubulin/FtsZ-like_C"/>
</dbReference>
<dbReference type="InterPro" id="IPR018316">
    <property type="entry name" value="Tubulin/FtsZ_2-layer-sand-dom"/>
</dbReference>
<dbReference type="InterPro" id="IPR036525">
    <property type="entry name" value="Tubulin/FtsZ_GTPase_sf"/>
</dbReference>
<dbReference type="InterPro" id="IPR003008">
    <property type="entry name" value="Tubulin_FtsZ_GTPase"/>
</dbReference>
<dbReference type="NCBIfam" id="TIGR00065">
    <property type="entry name" value="ftsZ"/>
    <property type="match status" value="1"/>
</dbReference>
<dbReference type="PANTHER" id="PTHR30314">
    <property type="entry name" value="CELL DIVISION PROTEIN FTSZ-RELATED"/>
    <property type="match status" value="1"/>
</dbReference>
<dbReference type="PANTHER" id="PTHR30314:SF3">
    <property type="entry name" value="MITOCHONDRIAL DIVISION PROTEIN FSZA"/>
    <property type="match status" value="1"/>
</dbReference>
<dbReference type="Pfam" id="PF12327">
    <property type="entry name" value="FtsZ_C"/>
    <property type="match status" value="1"/>
</dbReference>
<dbReference type="Pfam" id="PF00091">
    <property type="entry name" value="Tubulin"/>
    <property type="match status" value="1"/>
</dbReference>
<dbReference type="PRINTS" id="PR00423">
    <property type="entry name" value="CELLDVISFTSZ"/>
</dbReference>
<dbReference type="SMART" id="SM00864">
    <property type="entry name" value="Tubulin"/>
    <property type="match status" value="1"/>
</dbReference>
<dbReference type="SMART" id="SM00865">
    <property type="entry name" value="Tubulin_C"/>
    <property type="match status" value="1"/>
</dbReference>
<dbReference type="SUPFAM" id="SSF55307">
    <property type="entry name" value="Tubulin C-terminal domain-like"/>
    <property type="match status" value="1"/>
</dbReference>
<dbReference type="SUPFAM" id="SSF52490">
    <property type="entry name" value="Tubulin nucleotide-binding domain-like"/>
    <property type="match status" value="1"/>
</dbReference>
<dbReference type="PROSITE" id="PS01134">
    <property type="entry name" value="FTSZ_1"/>
    <property type="match status" value="1"/>
</dbReference>
<dbReference type="PROSITE" id="PS01135">
    <property type="entry name" value="FTSZ_2"/>
    <property type="match status" value="1"/>
</dbReference>
<keyword id="KW-0002">3D-structure</keyword>
<keyword id="KW-0013">ADP-ribosylation</keyword>
<keyword id="KW-0131">Cell cycle</keyword>
<keyword id="KW-0132">Cell division</keyword>
<keyword id="KW-0963">Cytoplasm</keyword>
<keyword id="KW-0903">Direct protein sequencing</keyword>
<keyword id="KW-0342">GTP-binding</keyword>
<keyword id="KW-0547">Nucleotide-binding</keyword>
<keyword id="KW-1185">Reference proteome</keyword>
<keyword id="KW-0717">Septation</keyword>
<name>FTSZ_ECOLI</name>
<gene>
    <name evidence="1" type="primary">ftsZ</name>
    <name type="synonym">sfiB</name>
    <name type="synonym">sulB</name>
    <name type="ordered locus">b0095</name>
    <name type="ordered locus">JW0093</name>
</gene>
<feature type="chain" id="PRO_0000114349" description="Cell division protein FtsZ">
    <location>
        <begin position="1"/>
        <end position="383"/>
    </location>
</feature>
<feature type="binding site" evidence="1">
    <location>
        <begin position="20"/>
        <end position="24"/>
    </location>
    <ligand>
        <name>GTP</name>
        <dbReference type="ChEBI" id="CHEBI:37565"/>
    </ligand>
</feature>
<feature type="binding site" evidence="1">
    <location>
        <begin position="107"/>
        <end position="109"/>
    </location>
    <ligand>
        <name>GTP</name>
        <dbReference type="ChEBI" id="CHEBI:37565"/>
    </ligand>
</feature>
<feature type="binding site" evidence="1">
    <location>
        <position position="138"/>
    </location>
    <ligand>
        <name>GTP</name>
        <dbReference type="ChEBI" id="CHEBI:37565"/>
    </ligand>
</feature>
<feature type="binding site" evidence="1">
    <location>
        <position position="142"/>
    </location>
    <ligand>
        <name>GTP</name>
        <dbReference type="ChEBI" id="CHEBI:37565"/>
    </ligand>
</feature>
<feature type="binding site" evidence="1">
    <location>
        <position position="186"/>
    </location>
    <ligand>
        <name>GTP</name>
        <dbReference type="ChEBI" id="CHEBI:37565"/>
    </ligand>
</feature>
<feature type="modified residue" description="(Microbial infection) ADP-ribosylarginine; by S.proteamaculans Tre1" evidence="14">
    <location>
        <position position="174"/>
    </location>
</feature>
<feature type="modified residue" description="(Microbial infection) ADP-ribosylarginine; by S.proteamaculans Tre1" evidence="14">
    <location>
        <position position="338"/>
    </location>
</feature>
<feature type="mutagenesis site" description="No interaction with MreB or CbtA (YeeV)." evidence="10">
    <location>
        <begin position="1"/>
        <end position="32"/>
    </location>
</feature>
<feature type="mutagenesis site" description="No interaction with CtpA.">
    <location>
        <begin position="33"/>
        <end position="49"/>
    </location>
</feature>
<feature type="mutagenesis site" description="In FtsZ-84; loss of GTPase-activity and conversion to an ATPase." evidence="16">
    <original>G</original>
    <variation>S</variation>
    <location>
        <position position="105"/>
    </location>
</feature>
<feature type="mutagenesis site" description="In FtsZ-Z3; lethal; greatly reduced GTP binding.">
    <original>T</original>
    <variation>A</variation>
    <location>
        <position position="108"/>
    </location>
</feature>
<feature type="mutagenesis site" description="Protein has decreased affinity for the cell inner membrane, polymerizes into filaments less efficiently than wild-type, the protofilaments no longer form bundles, still forms rings." evidence="6">
    <original>R</original>
    <variation>D</variation>
    <location>
        <position position="174"/>
    </location>
</feature>
<feature type="mutagenesis site" description="No interaction with MreB or CbtA (YeeV)." evidence="10">
    <location>
        <begin position="317"/>
        <end position="383"/>
    </location>
</feature>
<feature type="sequence conflict" description="In Ref. 5; AAA23818." evidence="21" ref="5">
    <original>ERIEGVEF</original>
    <variation>DALKVLNS</variation>
    <location>
        <begin position="32"/>
        <end position="39"/>
    </location>
</feature>
<feature type="sequence conflict" description="In Ref. 1; CAA38872." evidence="21" ref="1">
    <original>D</original>
    <variation>N</variation>
    <location>
        <position position="158"/>
    </location>
</feature>
<feature type="sequence conflict" description="In Ref. 1; CAA38872." evidence="21" ref="1">
    <original>Y</original>
    <variation>H</variation>
    <location>
        <position position="222"/>
    </location>
</feature>
<feature type="strand" evidence="23">
    <location>
        <begin position="13"/>
        <end position="18"/>
    </location>
</feature>
<feature type="helix" evidence="23">
    <location>
        <begin position="19"/>
        <end position="32"/>
    </location>
</feature>
<feature type="strand" evidence="23">
    <location>
        <begin position="38"/>
        <end position="44"/>
    </location>
</feature>
<feature type="helix" evidence="23">
    <location>
        <begin position="46"/>
        <end position="51"/>
    </location>
</feature>
<feature type="strand" evidence="23">
    <location>
        <begin position="55"/>
        <end position="59"/>
    </location>
</feature>
<feature type="helix" evidence="24">
    <location>
        <begin position="62"/>
        <end position="65"/>
    </location>
</feature>
<feature type="helix" evidence="23">
    <location>
        <begin position="70"/>
        <end position="72"/>
    </location>
</feature>
<feature type="helix" evidence="23">
    <location>
        <begin position="74"/>
        <end position="83"/>
    </location>
</feature>
<feature type="helix" evidence="23">
    <location>
        <begin position="85"/>
        <end position="92"/>
    </location>
</feature>
<feature type="strand" evidence="23">
    <location>
        <begin position="96"/>
        <end position="103"/>
    </location>
</feature>
<feature type="helix" evidence="23">
    <location>
        <begin position="108"/>
        <end position="122"/>
    </location>
</feature>
<feature type="strand" evidence="23">
    <location>
        <begin position="126"/>
        <end position="133"/>
    </location>
</feature>
<feature type="helix" evidence="23">
    <location>
        <begin position="136"/>
        <end position="138"/>
    </location>
</feature>
<feature type="helix" evidence="23">
    <location>
        <begin position="140"/>
        <end position="154"/>
    </location>
</feature>
<feature type="strand" evidence="23">
    <location>
        <begin position="158"/>
        <end position="164"/>
    </location>
</feature>
<feature type="helix" evidence="23">
    <location>
        <begin position="165"/>
        <end position="168"/>
    </location>
</feature>
<feature type="helix" evidence="23">
    <location>
        <begin position="178"/>
        <end position="201"/>
    </location>
</feature>
<feature type="helix" evidence="23">
    <location>
        <begin position="210"/>
        <end position="217"/>
    </location>
</feature>
<feature type="strand" evidence="23">
    <location>
        <begin position="221"/>
        <end position="230"/>
    </location>
</feature>
<feature type="helix" evidence="23">
    <location>
        <begin position="235"/>
        <end position="244"/>
    </location>
</feature>
<feature type="turn" evidence="23">
    <location>
        <begin position="247"/>
        <end position="251"/>
    </location>
</feature>
<feature type="helix" evidence="23">
    <location>
        <begin position="254"/>
        <end position="256"/>
    </location>
</feature>
<feature type="strand" evidence="23">
    <location>
        <begin position="258"/>
        <end position="266"/>
    </location>
</feature>
<feature type="helix" evidence="23">
    <location>
        <begin position="272"/>
        <end position="285"/>
    </location>
</feature>
<feature type="strand" evidence="23">
    <location>
        <begin position="288"/>
        <end position="298"/>
    </location>
</feature>
<feature type="strand" evidence="23">
    <location>
        <begin position="306"/>
        <end position="315"/>
    </location>
</feature>
<feature type="helix" evidence="22">
    <location>
        <begin position="374"/>
        <end position="382"/>
    </location>
</feature>
<reference key="1">
    <citation type="journal article" date="1985" name="Gene">
        <title>The nucleotide sequence of the essential cell-division gene ftsZ of Escherichia coli.</title>
        <authorList>
            <person name="Yi Q.-M."/>
            <person name="Lutkenhaus J."/>
        </authorList>
    </citation>
    <scope>NUCLEOTIDE SEQUENCE [GENOMIC DNA]</scope>
    <source>
        <strain>K12</strain>
    </source>
</reference>
<reference key="2">
    <citation type="journal article" date="1992" name="Nucleic Acids Res.">
        <title>Systematic sequencing of the Escherichia coli genome: analysis of the 0-2.4 min region.</title>
        <authorList>
            <person name="Yura T."/>
            <person name="Mori H."/>
            <person name="Nagai H."/>
            <person name="Nagata T."/>
            <person name="Ishihama A."/>
            <person name="Fujita N."/>
            <person name="Isono K."/>
            <person name="Mizobuchi K."/>
            <person name="Nakata A."/>
        </authorList>
    </citation>
    <scope>NUCLEOTIDE SEQUENCE [LARGE SCALE GENOMIC DNA]</scope>
    <source>
        <strain>K12</strain>
    </source>
</reference>
<reference key="3">
    <citation type="journal article" date="1997" name="Science">
        <title>The complete genome sequence of Escherichia coli K-12.</title>
        <authorList>
            <person name="Blattner F.R."/>
            <person name="Plunkett G. III"/>
            <person name="Bloch C.A."/>
            <person name="Perna N.T."/>
            <person name="Burland V."/>
            <person name="Riley M."/>
            <person name="Collado-Vides J."/>
            <person name="Glasner J.D."/>
            <person name="Rode C.K."/>
            <person name="Mayhew G.F."/>
            <person name="Gregor J."/>
            <person name="Davis N.W."/>
            <person name="Kirkpatrick H.A."/>
            <person name="Goeden M.A."/>
            <person name="Rose D.J."/>
            <person name="Mau B."/>
            <person name="Shao Y."/>
        </authorList>
    </citation>
    <scope>NUCLEOTIDE SEQUENCE [LARGE SCALE GENOMIC DNA]</scope>
    <source>
        <strain>K12 / MG1655 / ATCC 47076</strain>
    </source>
</reference>
<reference key="4">
    <citation type="journal article" date="2006" name="Mol. Syst. Biol.">
        <title>Highly accurate genome sequences of Escherichia coli K-12 strains MG1655 and W3110.</title>
        <authorList>
            <person name="Hayashi K."/>
            <person name="Morooka N."/>
            <person name="Yamamoto Y."/>
            <person name="Fujita K."/>
            <person name="Isono K."/>
            <person name="Choi S."/>
            <person name="Ohtsubo E."/>
            <person name="Baba T."/>
            <person name="Wanner B.L."/>
            <person name="Mori H."/>
            <person name="Horiuchi T."/>
        </authorList>
    </citation>
    <scope>NUCLEOTIDE SEQUENCE [LARGE SCALE GENOMIC DNA]</scope>
    <scope>SEQUENCE REVISION TO 158 AND 222</scope>
    <source>
        <strain>K12 / W3110 / ATCC 27325 / DSM 5911</strain>
    </source>
</reference>
<reference key="5">
    <citation type="journal article" date="1984" name="J. Bacteriol.">
        <title>DNA sequence and transcriptional organization of essential cell division genes ftsQ and ftsA of Escherichia coli: evidence for overlapping transcriptional units.</title>
        <authorList>
            <person name="Robinson A.C."/>
            <person name="Kenan D.J."/>
            <person name="Hatfull G.F."/>
            <person name="Sullivan N.F."/>
            <person name="Spiegelberg R."/>
            <person name="Donachie W.D."/>
        </authorList>
    </citation>
    <scope>NUCLEOTIDE SEQUENCE [GENOMIC DNA] OF 1-39</scope>
</reference>
<reference key="6">
    <citation type="journal article" date="1985" name="J. Mol. Biol.">
        <title>Structure and expression of the cell division genes ftsQ, ftsA and ftsZ.</title>
        <authorList>
            <person name="Yi Q.-M."/>
            <person name="Rockenbach S."/>
            <person name="Ward J.E. Jr."/>
            <person name="Lutkenhaus J."/>
        </authorList>
    </citation>
    <scope>NUCLEOTIDE SEQUENCE [GENOMIC DNA] OF 1-39</scope>
    <source>
        <strain>K12</strain>
    </source>
</reference>
<reference key="7">
    <citation type="submission" date="1996-02" db="UniProtKB">
        <authorList>
            <person name="Frutiger S."/>
            <person name="Hughes G.J."/>
            <person name="Pasquali C."/>
            <person name="Hochstrasser D.F."/>
        </authorList>
    </citation>
    <scope>PROTEIN SEQUENCE OF 1-12</scope>
    <source>
        <strain>K12 / W3110 / ATCC 27325 / DSM 5911</strain>
    </source>
</reference>
<reference key="8">
    <citation type="journal article" date="1997" name="Electrophoresis">
        <title>Comparing the predicted and observed properties of proteins encoded in the genome of Escherichia coli K-12.</title>
        <authorList>
            <person name="Link A.J."/>
            <person name="Robison K."/>
            <person name="Church G.M."/>
        </authorList>
    </citation>
    <scope>PROTEIN SEQUENCE OF 1-12</scope>
    <source>
        <strain>K12 / EMG2</strain>
    </source>
</reference>
<reference key="9">
    <citation type="journal article" date="2004" name="Mol. Microbiol.">
        <title>R174 of Escherichia coli FtsZ is involved in membrane interaction and protofilament bundling, and is essential for cell division.</title>
        <authorList>
            <person name="Koppelman C.M."/>
            <person name="Aarsman M.E."/>
            <person name="Postmus J."/>
            <person name="Pas E."/>
            <person name="Muijsers A.O."/>
            <person name="Scheffers D.J."/>
            <person name="Nanninga N."/>
            <person name="den Blaauwen T."/>
        </authorList>
    </citation>
    <scope>PROTEIN SEQUENCE OF 1-5 AND 175-180</scope>
    <scope>SUBUNIT</scope>
    <scope>SUBCELLULAR LOCATION</scope>
    <scope>MUTAGENESIS OF ARG-174</scope>
    <source>
        <strain>K12 / MC4100 / ATCC 35695 / DSM 6574</strain>
    </source>
</reference>
<reference key="10">
    <citation type="journal article" date="1987" name="J. Bacteriol.">
        <title>Sequence analysis, transcriptional organization, and insertional mutagenesis of the envA gene of Escherichia coli.</title>
        <authorList>
            <person name="Beall B."/>
            <person name="Lutkenhaus J."/>
        </authorList>
    </citation>
    <scope>NUCLEOTIDE SEQUENCE [GENOMIC DNA] OF 377-383</scope>
    <source>
        <strain>K12</strain>
    </source>
</reference>
<reference key="11">
    <citation type="journal article" date="1991" name="Nature">
        <title>FtsZ ring structure associated with division in Escherichia coli.</title>
        <authorList>
            <person name="Bi E."/>
            <person name="Lutkenhaus J."/>
        </authorList>
    </citation>
    <scope>SUBCELLULAR LOCATION</scope>
    <scope>RING-LIKE STRUCTURE</scope>
</reference>
<reference key="12">
    <citation type="journal article" date="1992" name="Nature">
        <title>Escherichia coli cell-division gene ftsZ encodes a novel GTP-binding protein.</title>
        <authorList>
            <person name="Raychaudhuri D."/>
            <person name="Park J.T."/>
        </authorList>
    </citation>
    <scope>GTPASE ACTIVITY</scope>
</reference>
<reference key="13">
    <citation type="journal article" date="1992" name="Nature">
        <title>The essential bacterial cell-division protein FtsZ is a GTPase.</title>
        <authorList>
            <person name="de Boer P."/>
            <person name="Crossley R."/>
            <person name="Rothfield L."/>
        </authorList>
    </citation>
    <scope>GTPASE ACTIVITY</scope>
</reference>
<reference key="14">
    <citation type="journal article" date="1994" name="J. Bacteriol.">
        <title>Guanine nucleotide-dependent assembly of FtsZ into filaments.</title>
        <authorList>
            <person name="Mukherjee A."/>
            <person name="Lutkenhaus J."/>
        </authorList>
    </citation>
    <scope>GTP-DEPENDENT FILAMENT FORMATION</scope>
</reference>
<reference key="15">
    <citation type="journal article" date="1994" name="Proc. Natl. Acad. Sci. U.S.A.">
        <title>GTP-dependent polymerization of Escherichia coli FtsZ protein to form tubules.</title>
        <authorList>
            <person name="Bramhill D."/>
            <person name="Thompson C.M."/>
        </authorList>
    </citation>
    <scope>GTP-DEPENDENT FILAMENT FORMATION</scope>
</reference>
<reference key="16">
    <citation type="journal article" date="1994" name="J. Biol. Chem.">
        <title>A point mutation converts Escherichia coli FtsZ septation GTPase to an ATPase.</title>
        <authorList>
            <person name="Raychaudhuri D."/>
            <person name="Park J.T."/>
        </authorList>
    </citation>
    <scope>MUTANTS</scope>
</reference>
<reference key="17">
    <citation type="journal article" date="1996" name="J. Bacteriol.">
        <title>Interaction between FtsZ and inhibitors of cell division.</title>
        <authorList>
            <person name="Huang J."/>
            <person name="Cao C."/>
            <person name="Lutkenhaus J."/>
        </authorList>
    </citation>
    <scope>ACTIVITY REGULATION</scope>
    <scope>INTERACTION WITH SULA</scope>
</reference>
<reference key="18">
    <citation type="journal article" date="1996" name="Proc. Natl. Acad. Sci. U.S.A.">
        <title>Colocalization of cell division proteins FtsZ and FtsA to cytoskeletal structures in living Escherichia coli cells by using green fluorescent protein.</title>
        <authorList>
            <person name="Ma X."/>
            <person name="Ehrhardt D.W."/>
            <person name="Margolin W."/>
        </authorList>
    </citation>
    <scope>SUBCELLULAR LOCATION</scope>
    <scope>INTERACTION WITH FTSA</scope>
</reference>
<reference key="19">
    <citation type="journal article" date="1998" name="EMBO J.">
        <title>Dynamic assembly of FtsZ regulated by GTP hydrolysis.</title>
        <authorList>
            <person name="Mukherjee A."/>
            <person name="Lutkenhaus J."/>
        </authorList>
    </citation>
    <scope>SUBUNIT</scope>
    <scope>GTPASE ACTIVITY</scope>
</reference>
<reference key="20">
    <citation type="journal article" date="1999" name="Mol. Microbiol.">
        <title>FtsZ dimerization in vivo.</title>
        <authorList>
            <person name="Di Lallo G."/>
            <person name="Anderluzzi D."/>
            <person name="Ghelardini P."/>
            <person name="Paolozzi L."/>
        </authorList>
    </citation>
    <scope>SUBUNIT</scope>
    <scope>DOMAIN</scope>
    <source>
        <strain>K12</strain>
    </source>
</reference>
<reference key="21">
    <citation type="journal article" date="2002" name="EMBO J.">
        <title>Unique and overlapping roles for ZipA and FtsA in septal ring assembly in Escherichia coli.</title>
        <authorList>
            <person name="Pichoff S."/>
            <person name="Lutkenhaus J."/>
        </authorList>
    </citation>
    <scope>ACTIVITY REGULATION</scope>
    <source>
        <strain>K12 / W3110 / ATCC 27325 / DSM 5911</strain>
    </source>
</reference>
<reference key="22">
    <citation type="journal article" date="2004" name="Biochemistry">
        <title>Rate-limiting guanosine 5'-triphosphate hydrolysis during nucleotide turnover by FtsZ, a prokaryotic tubulin homologue involved in bacterial cell division.</title>
        <authorList>
            <person name="Romberg L."/>
            <person name="Mitchison T.J."/>
        </authorList>
    </citation>
    <scope>SUBUNIT</scope>
    <scope>GTPASE ACTIVITY</scope>
</reference>
<reference key="23">
    <citation type="journal article" date="2004" name="J. Mol. Evol.">
        <title>Molecular evolution of FtsZ protein sequences encoded within the genomes of archaea, bacteria, and eukaryota.</title>
        <authorList>
            <person name="Vaughan S."/>
            <person name="Wickstead B."/>
            <person name="Gull K."/>
            <person name="Addinall S.G."/>
        </authorList>
    </citation>
    <scope>PHYLOGENETIC STUDY</scope>
</reference>
<reference key="24">
    <citation type="journal article" date="2004" name="Mol. Microbiol.">
        <title>Bacterial cell division and the septal ring.</title>
        <authorList>
            <person name="Weiss D.S."/>
        </authorList>
    </citation>
    <scope>REVIEW</scope>
</reference>
<reference key="25">
    <citation type="journal article" date="2007" name="J. Bacteriol.">
        <title>Interaction between cell division proteins FtsE and FtsZ.</title>
        <authorList>
            <person name="Corbin B.D."/>
            <person name="Wang Y."/>
            <person name="Beuria T.K."/>
            <person name="Margolin W."/>
        </authorList>
    </citation>
    <scope>INTERACTION WITH FTSE</scope>
    <source>
        <strain>K12 / MG1655 / ATCC 47076</strain>
    </source>
</reference>
<reference key="26">
    <citation type="journal article" date="2011" name="Mol. Microbiol.">
        <title>YeeV is an Escherichia coli toxin that inhibits cell division by targeting the cytoskeleton proteins, FtsZ and MreB.</title>
        <authorList>
            <person name="Tan Q."/>
            <person name="Awano N."/>
            <person name="Inouye M."/>
        </authorList>
    </citation>
    <scope>ACTIVITY REGULATION</scope>
    <scope>INTERACTION WITH MREB AND CBTA</scope>
    <scope>MUTAGENESIS OF 1-MET--GLU-32 AND 317-MET--ASP-383</scope>
    <source>
        <strain>K12 / BW25113</strain>
    </source>
</reference>
<reference key="27">
    <citation type="journal article" date="2009" name="Mol. Cell">
        <title>Hydroxyurea induces hydroxyl radical-mediated cell death in Escherichia coli.</title>
        <authorList>
            <person name="Davies B.W."/>
            <person name="Kohanski M.A."/>
            <person name="Simmons L.A."/>
            <person name="Winkler J.A."/>
            <person name="Collins J.J."/>
            <person name="Walker G.C."/>
        </authorList>
    </citation>
    <scope>INDUCTION BY HYDROXYUREA</scope>
    <source>
        <strain>K12 / MC4100 / ATCC 35695 / DSM 6574</strain>
    </source>
</reference>
<reference key="28">
    <citation type="journal article" date="2012" name="FEMS Microbiol. Lett.">
        <title>A novel membrane-bound toxin for cell division, CptA (YgfX), inhibits polymerization of cytoskeleton proteins, FtsZ and MreB, in Escherichia coli.</title>
        <authorList>
            <person name="Masuda H."/>
            <person name="Tan Q."/>
            <person name="Awano N."/>
            <person name="Yamaguchi Y."/>
            <person name="Inouye M."/>
        </authorList>
    </citation>
    <scope>ACTIVITY REGULATION</scope>
    <scope>INTERACTION WITH CPTA</scope>
    <source>
        <strain>B / BL21-DE3</strain>
        <strain>K12 / BW25113</strain>
    </source>
</reference>
<reference key="29">
    <citation type="journal article" date="2012" name="Mol. Microbiol.">
        <title>YeeU enhances the bundling of cytoskeletal polymers of MreB and FtsZ, antagonizing the CbtA (YeeV) toxicity in Escherichia coli.</title>
        <authorList>
            <person name="Masuda H."/>
            <person name="Tan Q."/>
            <person name="Awano N."/>
            <person name="Wu K.P."/>
            <person name="Inouye M."/>
        </authorList>
    </citation>
    <scope>ACTIVITY REGULATION</scope>
    <scope>INTERACTION WITH CBEA</scope>
    <source>
        <strain>K12 / BW25113</strain>
    </source>
</reference>
<reference key="30">
    <citation type="journal article" date="2017" name="Toxins">
        <title>Interaction of type IV toxin/antitoxin systems in cryptic prophages of Escherichia coli K-12.</title>
        <authorList>
            <person name="Wen Z."/>
            <person name="Wang P."/>
            <person name="Sun C."/>
            <person name="Guo Y."/>
            <person name="Wang X."/>
        </authorList>
    </citation>
    <scope>INTERACTION WITH CBTA; YKFI AND YPJF</scope>
    <source>
        <strain>K12 / BW25113</strain>
    </source>
</reference>
<reference key="31">
    <citation type="journal article" date="2018" name="Cell">
        <title>Bifunctional immunity proteins protect bacteria against FtsZ-targeting ADP-ribosylating toxins.</title>
        <authorList>
            <person name="Ting S.Y."/>
            <person name="Bosch D.E."/>
            <person name="Mangiameli S.M."/>
            <person name="Radey M.C."/>
            <person name="Huang S."/>
            <person name="Park Y.J."/>
            <person name="Kelly K.A."/>
            <person name="Filip S.K."/>
            <person name="Goo Y.A."/>
            <person name="Eng J.K."/>
            <person name="Allaire M."/>
            <person name="Veesler D."/>
            <person name="Wiggins P.A."/>
            <person name="Peterson S.B."/>
            <person name="Mougous J.D."/>
        </authorList>
    </citation>
    <scope>ADP-RIBOSYLATION AT ARG-174 AND ARG-338 (MICROBIAL INFECTION)</scope>
    <source>
        <strain>K12 / DH5-alpha</strain>
    </source>
</reference>
<reference key="32">
    <citation type="journal article" date="2000" name="EMBO J.">
        <title>The bacterial cell-division protein ZipA and its interaction with an FtsZ fragment revealed by X-ray crystallography.</title>
        <authorList>
            <person name="Mosyak L."/>
            <person name="Zhang Y."/>
            <person name="Glasfeld E."/>
            <person name="Haney S."/>
            <person name="Stahl M."/>
            <person name="Seehra J."/>
            <person name="Somers W.S."/>
        </authorList>
    </citation>
    <scope>X-RAY CRYSTALLOGRAPHY (1.95 ANGSTROMS) OF 367-383 IN COMPLEX WITH ZIPA</scope>
</reference>
<protein>
    <recommendedName>
        <fullName evidence="1">Cell division protein FtsZ</fullName>
    </recommendedName>
</protein>
<sequence>MFEPMELTNDAVIKVIGVGGGGGNAVEHMVRERIEGVEFFAVNTDAQALRKTAVGQTIQIGSGITKGLGAGANPEVGRNAADEDRDALRAALEGADMVFIAAGMGGGTGTGAAPVVAEVAKDLGILTVAVVTKPFNFEGKKRMAFAEQGITELSKHVDSLITIPNDKLLKVLGRGISLLDAFGAANDVLKGAVQGIAELITRPGLMNVDFADVRTVMSEMGYAMMGSGVASGEDRAEEAAEMAISSPLLEDIDLSGARGVLVNITAGFDLRLDEFETVGNTIRAFASDNATVVIGTSLDPDMNDELRVTVVATGIGMDKRPEITLVTNKQVQQPVMDRYQQHGMAPLTQEQKPVAKVVNDNAPQTAKEPDYLDIPAFLRKQAD</sequence>
<evidence type="ECO:0000255" key="1">
    <source>
        <dbReference type="HAMAP-Rule" id="MF_00909"/>
    </source>
</evidence>
<evidence type="ECO:0000269" key="2">
    <source>
    </source>
</evidence>
<evidence type="ECO:0000269" key="3">
    <source>
    </source>
</evidence>
<evidence type="ECO:0000269" key="4">
    <source>
    </source>
</evidence>
<evidence type="ECO:0000269" key="5">
    <source>
    </source>
</evidence>
<evidence type="ECO:0000269" key="6">
    <source>
    </source>
</evidence>
<evidence type="ECO:0000269" key="7">
    <source>
    </source>
</evidence>
<evidence type="ECO:0000269" key="8">
    <source>
    </source>
</evidence>
<evidence type="ECO:0000269" key="9">
    <source>
    </source>
</evidence>
<evidence type="ECO:0000269" key="10">
    <source>
    </source>
</evidence>
<evidence type="ECO:0000269" key="11">
    <source>
    </source>
</evidence>
<evidence type="ECO:0000269" key="12">
    <source>
    </source>
</evidence>
<evidence type="ECO:0000269" key="13">
    <source>
    </source>
</evidence>
<evidence type="ECO:0000269" key="14">
    <source>
    </source>
</evidence>
<evidence type="ECO:0000269" key="15">
    <source>
    </source>
</evidence>
<evidence type="ECO:0000269" key="16">
    <source>
    </source>
</evidence>
<evidence type="ECO:0000269" key="17">
    <source>
    </source>
</evidence>
<evidence type="ECO:0000269" key="18">
    <source>
    </source>
</evidence>
<evidence type="ECO:0000269" key="19">
    <source>
    </source>
</evidence>
<evidence type="ECO:0000269" key="20">
    <source>
    </source>
</evidence>
<evidence type="ECO:0000305" key="21"/>
<evidence type="ECO:0007829" key="22">
    <source>
        <dbReference type="PDB" id="1F47"/>
    </source>
</evidence>
<evidence type="ECO:0007829" key="23">
    <source>
        <dbReference type="PDB" id="6UMK"/>
    </source>
</evidence>
<evidence type="ECO:0007829" key="24">
    <source>
        <dbReference type="PDB" id="8GZX"/>
    </source>
</evidence>
<accession>P0A9A6</accession>
<accession>P06138</accession>
<accession>P77857</accession>
<accession>P78047</accession>
<proteinExistence type="evidence at protein level"/>
<organism>
    <name type="scientific">Escherichia coli (strain K12)</name>
    <dbReference type="NCBI Taxonomy" id="83333"/>
    <lineage>
        <taxon>Bacteria</taxon>
        <taxon>Pseudomonadati</taxon>
        <taxon>Pseudomonadota</taxon>
        <taxon>Gammaproteobacteria</taxon>
        <taxon>Enterobacterales</taxon>
        <taxon>Enterobacteriaceae</taxon>
        <taxon>Escherichia</taxon>
    </lineage>
</organism>
<comment type="function">
    <text>Essential cell division protein that forms a contractile ring structure (Z ring) at the future cell division site. The regulation of the ring assembly controls the timing and the location of cell division. One of the functions of the FtsZ ring is to recruit other cell division proteins to the septum to produce a new cell wall between the dividing cells. Binds GTP and shows GTPase activity. Polymerization and bundle formation is enhanced by CbeA.</text>
</comment>
<comment type="activity regulation">
    <text evidence="4 10 11 12 18">Formation of the FtsZ ring is inhibited by SulA, MinCD, DicB and toxins CbtA and CptA. Inhibition by toxin CbtA, SulA or DicB overexpression is neutralized by cytoskeleton bundling-enhancing protein CbeA, while inhibition by toxin CptA is neutralized by antitoxin CptB (PubMed:21166897, PubMed:22239607, PubMed:22515815, PubMed:8752322). Either FtsA or ZipA is required for Z ring formation and stabilization (PubMed:11847116).</text>
</comment>
<comment type="subunit">
    <text evidence="2 3 5 6 7 10 11 12 13 15 17 18 19 20">Homodimer. Polymerizes to form a dynamic ring structure in a strictly GTP-dependent manner. Polymers persist as long as GTP is present and disappear rapidly as soon as it is consumed. Interacts directly with several other division proteins, including FtsA and ZipA. Interacts with polymerization inhibitors SulA, CbtA and CptA. Interacts with MreB and polymerization bundling-enhancing factor CbeA. Interacts with CbtA, YkfI and YpjF (PubMed:28257056).</text>
</comment>
<comment type="interaction">
    <interactant intactId="EBI-370963">
        <id>P0A9A6</id>
    </interactant>
    <interactant intactId="EBI-1126877">
        <id>P76364</id>
        <label>cbeA</label>
    </interactant>
    <organismsDiffer>false</organismsDiffer>
    <experiments>2</experiments>
</comment>
<comment type="interaction">
    <interactant intactId="EBI-370963">
        <id>P0A9A6</id>
    </interactant>
    <interactant intactId="EBI-547386">
        <id>P0A6H1</id>
        <label>clpX</label>
    </interactant>
    <organismsDiffer>false</organismsDiffer>
    <experiments>2</experiments>
</comment>
<comment type="interaction">
    <interactant intactId="EBI-370963">
        <id>P0A9A6</id>
    </interactant>
    <interactant intactId="EBI-550562">
        <id>P0ABH0</id>
        <label>ftsA</label>
    </interactant>
    <organismsDiffer>false</organismsDiffer>
    <experiments>8</experiments>
</comment>
<comment type="interaction">
    <interactant intactId="EBI-370963">
        <id>P0A9A6</id>
    </interactant>
    <interactant intactId="EBI-550637">
        <id>P0A9R7</id>
        <label>ftsE</label>
    </interactant>
    <organismsDiffer>false</organismsDiffer>
    <experiments>2</experiments>
</comment>
<comment type="interaction">
    <interactant intactId="EBI-370963">
        <id>P0A9A6</id>
    </interactant>
    <interactant intactId="EBI-370963">
        <id>P0A9A6</id>
        <label>ftsZ</label>
    </interactant>
    <organismsDiffer>false</organismsDiffer>
    <experiments>11</experiments>
</comment>
<comment type="interaction">
    <interactant intactId="EBI-370963">
        <id>P0A9A6</id>
    </interactant>
    <interactant intactId="EBI-371008">
        <id>P0A9X4</id>
        <label>mreB</label>
    </interactant>
    <organismsDiffer>false</organismsDiffer>
    <experiments>7</experiments>
</comment>
<comment type="interaction">
    <interactant intactId="EBI-370963">
        <id>P0A9A6</id>
    </interactant>
    <interactant intactId="EBI-559071">
        <id>P36979</id>
        <label>rlmN</label>
    </interactant>
    <organismsDiffer>false</organismsDiffer>
    <experiments>3</experiments>
</comment>
<comment type="interaction">
    <interactant intactId="EBI-370963">
        <id>P0A9A6</id>
    </interactant>
    <interactant intactId="EBI-552519">
        <id>P75862</id>
        <label>zapC</label>
    </interactant>
    <organismsDiffer>false</organismsDiffer>
    <experiments>5</experiments>
</comment>
<comment type="interaction">
    <interactant intactId="EBI-370963">
        <id>P0A9A6</id>
    </interactant>
    <interactant intactId="EBI-1113728">
        <id>P36680</id>
        <label>zapD</label>
    </interactant>
    <organismsDiffer>false</organismsDiffer>
    <experiments>3</experiments>
</comment>
<comment type="interaction">
    <interactant intactId="EBI-370963">
        <id>P0A9A6</id>
    </interactant>
    <interactant intactId="EBI-1029213">
        <id>P77173</id>
        <label>zipA</label>
    </interactant>
    <organismsDiffer>false</organismsDiffer>
    <experiments>5</experiments>
</comment>
<comment type="subcellular location">
    <subcellularLocation>
        <location evidence="1 8 19">Cytoplasm</location>
    </subcellularLocation>
    <text evidence="6 8 14 19">Assembles in a ring-like structure at midcell at the inner surface of the cytoplasmic membrane.</text>
</comment>
<comment type="induction">
    <text evidence="9">Repressed 1.3-fold by hydroxyurea (at protein level).</text>
</comment>
<comment type="domain">
    <text evidence="2">The central and C-terminal regions are required for dimerization.</text>
</comment>
<comment type="PTM">
    <text evidence="14">(Microbial infection) ADP-ribosylated on Arg-174 and sometimes Arg-338 by Tre1 when infected by S.proteamaculans strain 568. This prevents the formation of Z rings, inhibiting cell division, leading to cell elongation and disadvantaging E.coli over S.proteamaculans during competition for nutrients. In vitro it can be de-ADP-ribosylated by S.proteamaculans Tri1.</text>
</comment>
<comment type="similarity">
    <text evidence="1">Belongs to the FtsZ family.</text>
</comment>
<comment type="online information" name="Protein Spotlight">
    <link uri="https://www.proteinspotlight.org/back_issues/171/"/>
    <text>Becoming two - Issue 171 of July 2015</text>
</comment>